<keyword id="KW-1003">Cell membrane</keyword>
<keyword id="KW-0472">Membrane</keyword>
<keyword id="KW-0675">Receptor</keyword>
<keyword id="KW-1185">Reference proteome</keyword>
<keyword id="KW-0807">Transducer</keyword>
<keyword id="KW-0812">Transmembrane</keyword>
<keyword id="KW-1133">Transmembrane helix</keyword>
<feature type="chain" id="PRO_0000216516" description="Putative gustatory receptor 47b">
    <location>
        <begin position="1"/>
        <end position="414"/>
    </location>
</feature>
<feature type="topological domain" description="Cytoplasmic" evidence="1">
    <location>
        <begin position="1"/>
        <end position="5"/>
    </location>
</feature>
<feature type="transmembrane region" description="Helical; Name=1" evidence="2">
    <location>
        <begin position="6"/>
        <end position="26"/>
    </location>
</feature>
<feature type="topological domain" description="Extracellular" evidence="1">
    <location>
        <begin position="27"/>
        <end position="40"/>
    </location>
</feature>
<feature type="transmembrane region" description="Helical; Name=2" evidence="2">
    <location>
        <begin position="41"/>
        <end position="61"/>
    </location>
</feature>
<feature type="topological domain" description="Cytoplasmic" evidence="1">
    <location>
        <begin position="62"/>
        <end position="142"/>
    </location>
</feature>
<feature type="transmembrane region" description="Helical; Name=3" evidence="2">
    <location>
        <begin position="143"/>
        <end position="163"/>
    </location>
</feature>
<feature type="topological domain" description="Extracellular" evidence="1">
    <location>
        <begin position="164"/>
        <end position="182"/>
    </location>
</feature>
<feature type="transmembrane region" description="Helical; Name=4" evidence="2">
    <location>
        <begin position="183"/>
        <end position="203"/>
    </location>
</feature>
<feature type="topological domain" description="Cytoplasmic" evidence="1">
    <location>
        <begin position="204"/>
        <end position="249"/>
    </location>
</feature>
<feature type="transmembrane region" description="Helical; Name=5" evidence="2">
    <location>
        <begin position="250"/>
        <end position="270"/>
    </location>
</feature>
<feature type="topological domain" description="Extracellular" evidence="1">
    <location>
        <begin position="271"/>
        <end position="291"/>
    </location>
</feature>
<feature type="transmembrane region" description="Helical; Name=6" evidence="2">
    <location>
        <begin position="292"/>
        <end position="312"/>
    </location>
</feature>
<feature type="topological domain" description="Cytoplasmic" evidence="1">
    <location>
        <begin position="313"/>
        <end position="364"/>
    </location>
</feature>
<feature type="transmembrane region" description="Helical; Name=7" evidence="2">
    <location>
        <begin position="365"/>
        <end position="385"/>
    </location>
</feature>
<feature type="topological domain" description="Extracellular" evidence="1">
    <location>
        <begin position="386"/>
        <end position="414"/>
    </location>
</feature>
<comment type="function">
    <text evidence="1">Probable gustatory receptor which mediates acceptance or avoidance behavior, depending on its substrates.</text>
</comment>
<comment type="subcellular location">
    <subcellularLocation>
        <location evidence="1">Cell membrane</location>
        <topology evidence="1">Multi-pass membrane protein</topology>
    </subcellularLocation>
</comment>
<comment type="tissue specificity">
    <text evidence="3">Expressed in neurons of the terminal external chemosensory organ of larvae.</text>
</comment>
<comment type="similarity">
    <text evidence="4">Belongs to the insect chemoreceptor superfamily. Gustatory receptor (GR) family. Gr57a subfamily.</text>
</comment>
<dbReference type="EMBL" id="AE013599">
    <property type="protein sequence ID" value="AAM68733.2"/>
    <property type="molecule type" value="Genomic_DNA"/>
</dbReference>
<dbReference type="RefSeq" id="NP_725040.2">
    <property type="nucleotide sequence ID" value="NM_165826.3"/>
</dbReference>
<dbReference type="SMR" id="P58961"/>
<dbReference type="STRING" id="7227.FBpp0087228"/>
<dbReference type="PaxDb" id="7227-FBpp0087228"/>
<dbReference type="EnsemblMetazoa" id="FBtr0088127">
    <property type="protein sequence ID" value="FBpp0087228"/>
    <property type="gene ID" value="FBgn0041241"/>
</dbReference>
<dbReference type="GeneID" id="117345"/>
<dbReference type="KEGG" id="dme:Dmel_CG30030"/>
<dbReference type="AGR" id="FB:FBgn0041241"/>
<dbReference type="CTD" id="117345"/>
<dbReference type="FlyBase" id="FBgn0041241">
    <property type="gene designation" value="Gr47b"/>
</dbReference>
<dbReference type="VEuPathDB" id="VectorBase:FBgn0041241"/>
<dbReference type="eggNOG" id="ENOG502T8D2">
    <property type="taxonomic scope" value="Eukaryota"/>
</dbReference>
<dbReference type="HOGENOM" id="CLU_657695_0_0_1"/>
<dbReference type="InParanoid" id="P58961"/>
<dbReference type="OMA" id="REKRNCM"/>
<dbReference type="OrthoDB" id="8016547at2759"/>
<dbReference type="PhylomeDB" id="P58961"/>
<dbReference type="BioGRID-ORCS" id="117345">
    <property type="hits" value="0 hits in 1 CRISPR screen"/>
</dbReference>
<dbReference type="GenomeRNAi" id="117345"/>
<dbReference type="PRO" id="PR:P58961"/>
<dbReference type="Proteomes" id="UP000000803">
    <property type="component" value="Chromosome 2R"/>
</dbReference>
<dbReference type="Bgee" id="FBgn0041241">
    <property type="expression patterns" value="Expressed in procephalic segment and 1 other cell type or tissue"/>
</dbReference>
<dbReference type="GO" id="GO:0030424">
    <property type="term" value="C:axon"/>
    <property type="evidence" value="ECO:0000318"/>
    <property type="project" value="GO_Central"/>
</dbReference>
<dbReference type="GO" id="GO:0030425">
    <property type="term" value="C:dendrite"/>
    <property type="evidence" value="ECO:0000318"/>
    <property type="project" value="GO_Central"/>
</dbReference>
<dbReference type="GO" id="GO:0043025">
    <property type="term" value="C:neuronal cell body"/>
    <property type="evidence" value="ECO:0000318"/>
    <property type="project" value="GO_Central"/>
</dbReference>
<dbReference type="GO" id="GO:0005886">
    <property type="term" value="C:plasma membrane"/>
    <property type="evidence" value="ECO:0000250"/>
    <property type="project" value="FlyBase"/>
</dbReference>
<dbReference type="GO" id="GO:0015276">
    <property type="term" value="F:ligand-gated monoatomic ion channel activity"/>
    <property type="evidence" value="ECO:0000250"/>
    <property type="project" value="FlyBase"/>
</dbReference>
<dbReference type="GO" id="GO:0008527">
    <property type="term" value="F:taste receptor activity"/>
    <property type="evidence" value="ECO:0000250"/>
    <property type="project" value="FlyBase"/>
</dbReference>
<dbReference type="GO" id="GO:0007635">
    <property type="term" value="P:chemosensory behavior"/>
    <property type="evidence" value="ECO:0000318"/>
    <property type="project" value="GO_Central"/>
</dbReference>
<dbReference type="GO" id="GO:0008049">
    <property type="term" value="P:male courtship behavior"/>
    <property type="evidence" value="ECO:0000318"/>
    <property type="project" value="GO_Central"/>
</dbReference>
<dbReference type="GO" id="GO:0034220">
    <property type="term" value="P:monoatomic ion transmembrane transport"/>
    <property type="evidence" value="ECO:0000250"/>
    <property type="project" value="FlyBase"/>
</dbReference>
<dbReference type="GO" id="GO:0050909">
    <property type="term" value="P:sensory perception of taste"/>
    <property type="evidence" value="ECO:0000250"/>
    <property type="project" value="FlyBase"/>
</dbReference>
<dbReference type="GO" id="GO:0007165">
    <property type="term" value="P:signal transduction"/>
    <property type="evidence" value="ECO:0007669"/>
    <property type="project" value="UniProtKB-KW"/>
</dbReference>
<proteinExistence type="evidence at transcript level"/>
<sequence>MQRDDGFVYCYGNLYSLLLYWGLVTIRVRSPDRGGAFSNRWTVCYALFTRSFMVICFMATVMTKLRDPEMSAAMFGHLSPLVKAIFTWECLSCSVTYIEYCLSLDLQKDRHLKLVARMQEFDRSVLMVFPHVQWNYRRARLKYWYGTVIVGFCFFSFSISLIFDTTRCTCGIPSTLLMAFTYTLLTSSVGLLGFVHIGIMDFIRVRLRLVQQLLHQLYQADDSSEVHERIAYLFEMSKRCSFLLAELNGVFGFAAAAGIFYDFTIMTCFVYVICQKLLEREPWDPEYVYMLLHVAIHTYKVVITSTYGYLLLREKRNCMHLLSQYSRYFSGQDVARRKTEDFQHWRMHNRQAAMVGSTTLLSVSTIYLVYNGMANYVIILVQLLFQQQQIKDHQLTSGKDVDIVGPMGPITHMD</sequence>
<accession>P58961</accession>
<accession>Q8MKZ0</accession>
<name>GR47B_DROME</name>
<organism>
    <name type="scientific">Drosophila melanogaster</name>
    <name type="common">Fruit fly</name>
    <dbReference type="NCBI Taxonomy" id="7227"/>
    <lineage>
        <taxon>Eukaryota</taxon>
        <taxon>Metazoa</taxon>
        <taxon>Ecdysozoa</taxon>
        <taxon>Arthropoda</taxon>
        <taxon>Hexapoda</taxon>
        <taxon>Insecta</taxon>
        <taxon>Pterygota</taxon>
        <taxon>Neoptera</taxon>
        <taxon>Endopterygota</taxon>
        <taxon>Diptera</taxon>
        <taxon>Brachycera</taxon>
        <taxon>Muscomorpha</taxon>
        <taxon>Ephydroidea</taxon>
        <taxon>Drosophilidae</taxon>
        <taxon>Drosophila</taxon>
        <taxon>Sophophora</taxon>
    </lineage>
</organism>
<evidence type="ECO:0000250" key="1"/>
<evidence type="ECO:0000255" key="2"/>
<evidence type="ECO:0000269" key="3">
    <source>
    </source>
</evidence>
<evidence type="ECO:0000305" key="4"/>
<gene>
    <name type="primary">Gr47b</name>
    <name type="ORF">CG30030</name>
</gene>
<reference key="1">
    <citation type="journal article" date="2000" name="Science">
        <title>The genome sequence of Drosophila melanogaster.</title>
        <authorList>
            <person name="Adams M.D."/>
            <person name="Celniker S.E."/>
            <person name="Holt R.A."/>
            <person name="Evans C.A."/>
            <person name="Gocayne J.D."/>
            <person name="Amanatides P.G."/>
            <person name="Scherer S.E."/>
            <person name="Li P.W."/>
            <person name="Hoskins R.A."/>
            <person name="Galle R.F."/>
            <person name="George R.A."/>
            <person name="Lewis S.E."/>
            <person name="Richards S."/>
            <person name="Ashburner M."/>
            <person name="Henderson S.N."/>
            <person name="Sutton G.G."/>
            <person name="Wortman J.R."/>
            <person name="Yandell M.D."/>
            <person name="Zhang Q."/>
            <person name="Chen L.X."/>
            <person name="Brandon R.C."/>
            <person name="Rogers Y.-H.C."/>
            <person name="Blazej R.G."/>
            <person name="Champe M."/>
            <person name="Pfeiffer B.D."/>
            <person name="Wan K.H."/>
            <person name="Doyle C."/>
            <person name="Baxter E.G."/>
            <person name="Helt G."/>
            <person name="Nelson C.R."/>
            <person name="Miklos G.L.G."/>
            <person name="Abril J.F."/>
            <person name="Agbayani A."/>
            <person name="An H.-J."/>
            <person name="Andrews-Pfannkoch C."/>
            <person name="Baldwin D."/>
            <person name="Ballew R.M."/>
            <person name="Basu A."/>
            <person name="Baxendale J."/>
            <person name="Bayraktaroglu L."/>
            <person name="Beasley E.M."/>
            <person name="Beeson K.Y."/>
            <person name="Benos P.V."/>
            <person name="Berman B.P."/>
            <person name="Bhandari D."/>
            <person name="Bolshakov S."/>
            <person name="Borkova D."/>
            <person name="Botchan M.R."/>
            <person name="Bouck J."/>
            <person name="Brokstein P."/>
            <person name="Brottier P."/>
            <person name="Burtis K.C."/>
            <person name="Busam D.A."/>
            <person name="Butler H."/>
            <person name="Cadieu E."/>
            <person name="Center A."/>
            <person name="Chandra I."/>
            <person name="Cherry J.M."/>
            <person name="Cawley S."/>
            <person name="Dahlke C."/>
            <person name="Davenport L.B."/>
            <person name="Davies P."/>
            <person name="de Pablos B."/>
            <person name="Delcher A."/>
            <person name="Deng Z."/>
            <person name="Mays A.D."/>
            <person name="Dew I."/>
            <person name="Dietz S.M."/>
            <person name="Dodson K."/>
            <person name="Doup L.E."/>
            <person name="Downes M."/>
            <person name="Dugan-Rocha S."/>
            <person name="Dunkov B.C."/>
            <person name="Dunn P."/>
            <person name="Durbin K.J."/>
            <person name="Evangelista C.C."/>
            <person name="Ferraz C."/>
            <person name="Ferriera S."/>
            <person name="Fleischmann W."/>
            <person name="Fosler C."/>
            <person name="Gabrielian A.E."/>
            <person name="Garg N.S."/>
            <person name="Gelbart W.M."/>
            <person name="Glasser K."/>
            <person name="Glodek A."/>
            <person name="Gong F."/>
            <person name="Gorrell J.H."/>
            <person name="Gu Z."/>
            <person name="Guan P."/>
            <person name="Harris M."/>
            <person name="Harris N.L."/>
            <person name="Harvey D.A."/>
            <person name="Heiman T.J."/>
            <person name="Hernandez J.R."/>
            <person name="Houck J."/>
            <person name="Hostin D."/>
            <person name="Houston K.A."/>
            <person name="Howland T.J."/>
            <person name="Wei M.-H."/>
            <person name="Ibegwam C."/>
            <person name="Jalali M."/>
            <person name="Kalush F."/>
            <person name="Karpen G.H."/>
            <person name="Ke Z."/>
            <person name="Kennison J.A."/>
            <person name="Ketchum K.A."/>
            <person name="Kimmel B.E."/>
            <person name="Kodira C.D."/>
            <person name="Kraft C.L."/>
            <person name="Kravitz S."/>
            <person name="Kulp D."/>
            <person name="Lai Z."/>
            <person name="Lasko P."/>
            <person name="Lei Y."/>
            <person name="Levitsky A.A."/>
            <person name="Li J.H."/>
            <person name="Li Z."/>
            <person name="Liang Y."/>
            <person name="Lin X."/>
            <person name="Liu X."/>
            <person name="Mattei B."/>
            <person name="McIntosh T.C."/>
            <person name="McLeod M.P."/>
            <person name="McPherson D."/>
            <person name="Merkulov G."/>
            <person name="Milshina N.V."/>
            <person name="Mobarry C."/>
            <person name="Morris J."/>
            <person name="Moshrefi A."/>
            <person name="Mount S.M."/>
            <person name="Moy M."/>
            <person name="Murphy B."/>
            <person name="Murphy L."/>
            <person name="Muzny D.M."/>
            <person name="Nelson D.L."/>
            <person name="Nelson D.R."/>
            <person name="Nelson K.A."/>
            <person name="Nixon K."/>
            <person name="Nusskern D.R."/>
            <person name="Pacleb J.M."/>
            <person name="Palazzolo M."/>
            <person name="Pittman G.S."/>
            <person name="Pan S."/>
            <person name="Pollard J."/>
            <person name="Puri V."/>
            <person name="Reese M.G."/>
            <person name="Reinert K."/>
            <person name="Remington K."/>
            <person name="Saunders R.D.C."/>
            <person name="Scheeler F."/>
            <person name="Shen H."/>
            <person name="Shue B.C."/>
            <person name="Siden-Kiamos I."/>
            <person name="Simpson M."/>
            <person name="Skupski M.P."/>
            <person name="Smith T.J."/>
            <person name="Spier E."/>
            <person name="Spradling A.C."/>
            <person name="Stapleton M."/>
            <person name="Strong R."/>
            <person name="Sun E."/>
            <person name="Svirskas R."/>
            <person name="Tector C."/>
            <person name="Turner R."/>
            <person name="Venter E."/>
            <person name="Wang A.H."/>
            <person name="Wang X."/>
            <person name="Wang Z.-Y."/>
            <person name="Wassarman D.A."/>
            <person name="Weinstock G.M."/>
            <person name="Weissenbach J."/>
            <person name="Williams S.M."/>
            <person name="Woodage T."/>
            <person name="Worley K.C."/>
            <person name="Wu D."/>
            <person name="Yang S."/>
            <person name="Yao Q.A."/>
            <person name="Ye J."/>
            <person name="Yeh R.-F."/>
            <person name="Zaveri J.S."/>
            <person name="Zhan M."/>
            <person name="Zhang G."/>
            <person name="Zhao Q."/>
            <person name="Zheng L."/>
            <person name="Zheng X.H."/>
            <person name="Zhong F.N."/>
            <person name="Zhong W."/>
            <person name="Zhou X."/>
            <person name="Zhu S.C."/>
            <person name="Zhu X."/>
            <person name="Smith H.O."/>
            <person name="Gibbs R.A."/>
            <person name="Myers E.W."/>
            <person name="Rubin G.M."/>
            <person name="Venter J.C."/>
        </authorList>
    </citation>
    <scope>NUCLEOTIDE SEQUENCE [LARGE SCALE GENOMIC DNA]</scope>
    <source>
        <strain>Berkeley</strain>
    </source>
</reference>
<reference key="2">
    <citation type="journal article" date="2002" name="Genome Biol.">
        <title>Annotation of the Drosophila melanogaster euchromatic genome: a systematic review.</title>
        <authorList>
            <person name="Misra S."/>
            <person name="Crosby M.A."/>
            <person name="Mungall C.J."/>
            <person name="Matthews B.B."/>
            <person name="Campbell K.S."/>
            <person name="Hradecky P."/>
            <person name="Huang Y."/>
            <person name="Kaminker J.S."/>
            <person name="Millburn G.H."/>
            <person name="Prochnik S.E."/>
            <person name="Smith C.D."/>
            <person name="Tupy J.L."/>
            <person name="Whitfield E.J."/>
            <person name="Bayraktaroglu L."/>
            <person name="Berman B.P."/>
            <person name="Bettencourt B.R."/>
            <person name="Celniker S.E."/>
            <person name="de Grey A.D.N.J."/>
            <person name="Drysdale R.A."/>
            <person name="Harris N.L."/>
            <person name="Richter J."/>
            <person name="Russo S."/>
            <person name="Schroeder A.J."/>
            <person name="Shu S.Q."/>
            <person name="Stapleton M."/>
            <person name="Yamada C."/>
            <person name="Ashburner M."/>
            <person name="Gelbart W.M."/>
            <person name="Rubin G.M."/>
            <person name="Lewis S.E."/>
        </authorList>
    </citation>
    <scope>GENOME REANNOTATION</scope>
    <source>
        <strain>Berkeley</strain>
    </source>
</reference>
<reference key="3">
    <citation type="unpublished observations" date="2001-11">
        <authorList>
            <person name="Robertson H."/>
        </authorList>
    </citation>
    <scope>CONCEPTUAL TRANSLATION</scope>
</reference>
<reference key="4">
    <citation type="journal article" date="2011" name="J. Neurosci.">
        <title>Molecular and cellular organization of the taste system in the Drosophila larva.</title>
        <authorList>
            <person name="Kwon J.Y."/>
            <person name="Dahanukar A."/>
            <person name="Weiss L.A."/>
            <person name="Carlson J.R."/>
        </authorList>
    </citation>
    <scope>TISSUE SPECIFICITY</scope>
</reference>
<protein>
    <recommendedName>
        <fullName>Putative gustatory receptor 47b</fullName>
    </recommendedName>
</protein>